<name>TRUB_BACC1</name>
<comment type="function">
    <text evidence="1">Responsible for synthesis of pseudouridine from uracil-55 in the psi GC loop of transfer RNAs.</text>
</comment>
<comment type="catalytic activity">
    <reaction evidence="1">
        <text>uridine(55) in tRNA = pseudouridine(55) in tRNA</text>
        <dbReference type="Rhea" id="RHEA:42532"/>
        <dbReference type="Rhea" id="RHEA-COMP:10101"/>
        <dbReference type="Rhea" id="RHEA-COMP:10102"/>
        <dbReference type="ChEBI" id="CHEBI:65314"/>
        <dbReference type="ChEBI" id="CHEBI:65315"/>
        <dbReference type="EC" id="5.4.99.25"/>
    </reaction>
</comment>
<comment type="similarity">
    <text evidence="1">Belongs to the pseudouridine synthase TruB family. Type 1 subfamily.</text>
</comment>
<organism>
    <name type="scientific">Bacillus cereus (strain ATCC 10987 / NRS 248)</name>
    <dbReference type="NCBI Taxonomy" id="222523"/>
    <lineage>
        <taxon>Bacteria</taxon>
        <taxon>Bacillati</taxon>
        <taxon>Bacillota</taxon>
        <taxon>Bacilli</taxon>
        <taxon>Bacillales</taxon>
        <taxon>Bacillaceae</taxon>
        <taxon>Bacillus</taxon>
        <taxon>Bacillus cereus group</taxon>
    </lineage>
</organism>
<proteinExistence type="inferred from homology"/>
<accession>Q732R2</accession>
<sequence>MEGVVLLHKPKGMTSHDCIFKLRKILREKRIGHTGTLDPDVTGVLPICVGRATKIAQFLTSETKTYEGEVTLGFSTTTEDASGEVVETKHVDRVITRKEVEEVLAALTGTIEQMPPMFSAVKVNGKKLYEYARAGQEVERPVRTITIHEFVLLDEREVFEGENISFRFRVTCSKGTYVRTLAVMIGEKLGFPSHMSHLVRTASGEFVLEDCISFEEIEENVQNGTVESIFISIDEALSKFPKMVVDEKQAEKIKNGMFLKNELQITAPFITVFDKNDRCLAIYEHHPKHPGMLKPMKVLVNNQELKL</sequence>
<evidence type="ECO:0000255" key="1">
    <source>
        <dbReference type="HAMAP-Rule" id="MF_01080"/>
    </source>
</evidence>
<protein>
    <recommendedName>
        <fullName evidence="1">tRNA pseudouridine synthase B</fullName>
        <ecNumber evidence="1">5.4.99.25</ecNumber>
    </recommendedName>
    <alternativeName>
        <fullName evidence="1">tRNA pseudouridine(55) synthase</fullName>
        <shortName evidence="1">Psi55 synthase</shortName>
    </alternativeName>
    <alternativeName>
        <fullName evidence="1">tRNA pseudouridylate synthase</fullName>
    </alternativeName>
    <alternativeName>
        <fullName evidence="1">tRNA-uridine isomerase</fullName>
    </alternativeName>
</protein>
<gene>
    <name evidence="1" type="primary">truB</name>
    <name type="ordered locus">BCE_3848</name>
</gene>
<reference key="1">
    <citation type="journal article" date="2004" name="Nucleic Acids Res.">
        <title>The genome sequence of Bacillus cereus ATCC 10987 reveals metabolic adaptations and a large plasmid related to Bacillus anthracis pXO1.</title>
        <authorList>
            <person name="Rasko D.A."/>
            <person name="Ravel J."/>
            <person name="Oekstad O.A."/>
            <person name="Helgason E."/>
            <person name="Cer R.Z."/>
            <person name="Jiang L."/>
            <person name="Shores K.A."/>
            <person name="Fouts D.E."/>
            <person name="Tourasse N.J."/>
            <person name="Angiuoli S.V."/>
            <person name="Kolonay J.F."/>
            <person name="Nelson W.C."/>
            <person name="Kolstoe A.-B."/>
            <person name="Fraser C.M."/>
            <person name="Read T.D."/>
        </authorList>
    </citation>
    <scope>NUCLEOTIDE SEQUENCE [LARGE SCALE GENOMIC DNA]</scope>
    <source>
        <strain>ATCC 10987 / NRS 248</strain>
    </source>
</reference>
<dbReference type="EC" id="5.4.99.25" evidence="1"/>
<dbReference type="EMBL" id="AE017194">
    <property type="protein sequence ID" value="AAS42753.1"/>
    <property type="molecule type" value="Genomic_DNA"/>
</dbReference>
<dbReference type="SMR" id="Q732R2"/>
<dbReference type="KEGG" id="bca:BCE_3848"/>
<dbReference type="HOGENOM" id="CLU_032087_0_1_9"/>
<dbReference type="Proteomes" id="UP000002527">
    <property type="component" value="Chromosome"/>
</dbReference>
<dbReference type="GO" id="GO:0003723">
    <property type="term" value="F:RNA binding"/>
    <property type="evidence" value="ECO:0007669"/>
    <property type="project" value="InterPro"/>
</dbReference>
<dbReference type="GO" id="GO:0160148">
    <property type="term" value="F:tRNA pseudouridine(55) synthase activity"/>
    <property type="evidence" value="ECO:0007669"/>
    <property type="project" value="UniProtKB-EC"/>
</dbReference>
<dbReference type="GO" id="GO:1990481">
    <property type="term" value="P:mRNA pseudouridine synthesis"/>
    <property type="evidence" value="ECO:0007669"/>
    <property type="project" value="TreeGrafter"/>
</dbReference>
<dbReference type="GO" id="GO:0031119">
    <property type="term" value="P:tRNA pseudouridine synthesis"/>
    <property type="evidence" value="ECO:0007669"/>
    <property type="project" value="UniProtKB-UniRule"/>
</dbReference>
<dbReference type="CDD" id="cd02573">
    <property type="entry name" value="PseudoU_synth_EcTruB"/>
    <property type="match status" value="1"/>
</dbReference>
<dbReference type="FunFam" id="3.30.2350.10:FF:000011">
    <property type="entry name" value="tRNA pseudouridine synthase B"/>
    <property type="match status" value="1"/>
</dbReference>
<dbReference type="Gene3D" id="3.30.2350.10">
    <property type="entry name" value="Pseudouridine synthase"/>
    <property type="match status" value="1"/>
</dbReference>
<dbReference type="HAMAP" id="MF_01080">
    <property type="entry name" value="TruB_bact"/>
    <property type="match status" value="1"/>
</dbReference>
<dbReference type="InterPro" id="IPR020103">
    <property type="entry name" value="PsdUridine_synth_cat_dom_sf"/>
</dbReference>
<dbReference type="InterPro" id="IPR002501">
    <property type="entry name" value="PsdUridine_synth_N"/>
</dbReference>
<dbReference type="InterPro" id="IPR014780">
    <property type="entry name" value="tRNA_psdUridine_synth_TruB"/>
</dbReference>
<dbReference type="InterPro" id="IPR032819">
    <property type="entry name" value="TruB_C"/>
</dbReference>
<dbReference type="NCBIfam" id="TIGR00431">
    <property type="entry name" value="TruB"/>
    <property type="match status" value="1"/>
</dbReference>
<dbReference type="PANTHER" id="PTHR13767:SF2">
    <property type="entry name" value="PSEUDOURIDYLATE SYNTHASE TRUB1"/>
    <property type="match status" value="1"/>
</dbReference>
<dbReference type="PANTHER" id="PTHR13767">
    <property type="entry name" value="TRNA-PSEUDOURIDINE SYNTHASE"/>
    <property type="match status" value="1"/>
</dbReference>
<dbReference type="Pfam" id="PF16198">
    <property type="entry name" value="TruB_C_2"/>
    <property type="match status" value="1"/>
</dbReference>
<dbReference type="Pfam" id="PF01509">
    <property type="entry name" value="TruB_N"/>
    <property type="match status" value="1"/>
</dbReference>
<dbReference type="SUPFAM" id="SSF55120">
    <property type="entry name" value="Pseudouridine synthase"/>
    <property type="match status" value="1"/>
</dbReference>
<feature type="chain" id="PRO_0000121784" description="tRNA pseudouridine synthase B">
    <location>
        <begin position="1"/>
        <end position="307"/>
    </location>
</feature>
<feature type="active site" description="Nucleophile" evidence="1">
    <location>
        <position position="38"/>
    </location>
</feature>
<keyword id="KW-0413">Isomerase</keyword>
<keyword id="KW-0819">tRNA processing</keyword>